<accession>Q8RX77</accession>
<accession>Q9CAS0</accession>
<evidence type="ECO:0000255" key="1"/>
<evidence type="ECO:0000256" key="2">
    <source>
        <dbReference type="SAM" id="MobiDB-lite"/>
    </source>
</evidence>
<evidence type="ECO:0000269" key="3">
    <source>
    </source>
</evidence>
<evidence type="ECO:0000269" key="4">
    <source>
    </source>
</evidence>
<evidence type="ECO:0000269" key="5">
    <source>
    </source>
</evidence>
<evidence type="ECO:0000269" key="6">
    <source>
    </source>
</evidence>
<evidence type="ECO:0000305" key="7"/>
<proteinExistence type="evidence at protein level"/>
<keyword id="KW-1003">Cell membrane</keyword>
<keyword id="KW-0472">Membrane</keyword>
<keyword id="KW-0534">Nitrate assimilation</keyword>
<keyword id="KW-1185">Reference proteome</keyword>
<keyword id="KW-0769">Symport</keyword>
<keyword id="KW-0812">Transmembrane</keyword>
<keyword id="KW-1133">Transmembrane helix</keyword>
<keyword id="KW-0813">Transport</keyword>
<keyword id="KW-0832">Ubl conjugation</keyword>
<dbReference type="EMBL" id="AC010675">
    <property type="protein sequence ID" value="AAG52567.1"/>
    <property type="status" value="ALT_SEQ"/>
    <property type="molecule type" value="Genomic_DNA"/>
</dbReference>
<dbReference type="EMBL" id="CP002684">
    <property type="protein sequence ID" value="AEE34993.1"/>
    <property type="molecule type" value="Genomic_DNA"/>
</dbReference>
<dbReference type="EMBL" id="AY090257">
    <property type="protein sequence ID" value="AAL90918.1"/>
    <property type="molecule type" value="mRNA"/>
</dbReference>
<dbReference type="EMBL" id="AY125531">
    <property type="protein sequence ID" value="AAM78041.1"/>
    <property type="molecule type" value="mRNA"/>
</dbReference>
<dbReference type="PIR" id="A96721">
    <property type="entry name" value="A96721"/>
</dbReference>
<dbReference type="RefSeq" id="NP_564979.1">
    <property type="nucleotide sequence ID" value="NM_105655.3"/>
</dbReference>
<dbReference type="SMR" id="Q8RX77"/>
<dbReference type="BioGRID" id="28544">
    <property type="interactions" value="24"/>
</dbReference>
<dbReference type="FunCoup" id="Q8RX77">
    <property type="interactions" value="1538"/>
</dbReference>
<dbReference type="IntAct" id="Q8RX77">
    <property type="interactions" value="24"/>
</dbReference>
<dbReference type="STRING" id="3702.Q8RX77"/>
<dbReference type="TCDB" id="2.A.17.3.15">
    <property type="family name" value="the proton-dependent oligopeptide transporter (pot/ptr) family"/>
</dbReference>
<dbReference type="iPTMnet" id="Q8RX77"/>
<dbReference type="PaxDb" id="3702-AT1G69870.1"/>
<dbReference type="ProteomicsDB" id="226102"/>
<dbReference type="EnsemblPlants" id="AT1G69870.1">
    <property type="protein sequence ID" value="AT1G69870.1"/>
    <property type="gene ID" value="AT1G69870"/>
</dbReference>
<dbReference type="GeneID" id="843323"/>
<dbReference type="Gramene" id="AT1G69870.1">
    <property type="protein sequence ID" value="AT1G69870.1"/>
    <property type="gene ID" value="AT1G69870"/>
</dbReference>
<dbReference type="KEGG" id="ath:AT1G69870"/>
<dbReference type="Araport" id="AT1G69870"/>
<dbReference type="TAIR" id="AT1G69870">
    <property type="gene designation" value="NPF2.13"/>
</dbReference>
<dbReference type="eggNOG" id="KOG1237">
    <property type="taxonomic scope" value="Eukaryota"/>
</dbReference>
<dbReference type="HOGENOM" id="CLU_009313_4_2_1"/>
<dbReference type="InParanoid" id="Q8RX77"/>
<dbReference type="OMA" id="LPTIMFA"/>
<dbReference type="PhylomeDB" id="Q8RX77"/>
<dbReference type="PRO" id="PR:Q8RX77"/>
<dbReference type="Proteomes" id="UP000006548">
    <property type="component" value="Chromosome 1"/>
</dbReference>
<dbReference type="ExpressionAtlas" id="Q8RX77">
    <property type="expression patterns" value="baseline and differential"/>
</dbReference>
<dbReference type="GO" id="GO:0005886">
    <property type="term" value="C:plasma membrane"/>
    <property type="evidence" value="ECO:0000314"/>
    <property type="project" value="TAIR"/>
</dbReference>
<dbReference type="GO" id="GO:0080054">
    <property type="term" value="F:low-affinity nitrate transmembrane transporter activity"/>
    <property type="evidence" value="ECO:0000314"/>
    <property type="project" value="TAIR"/>
</dbReference>
<dbReference type="GO" id="GO:0015293">
    <property type="term" value="F:symporter activity"/>
    <property type="evidence" value="ECO:0007669"/>
    <property type="project" value="UniProtKB-KW"/>
</dbReference>
<dbReference type="GO" id="GO:0042128">
    <property type="term" value="P:nitrate assimilation"/>
    <property type="evidence" value="ECO:0007669"/>
    <property type="project" value="UniProtKB-KW"/>
</dbReference>
<dbReference type="GO" id="GO:0015706">
    <property type="term" value="P:nitrate transmembrane transport"/>
    <property type="evidence" value="ECO:0000314"/>
    <property type="project" value="TAIR"/>
</dbReference>
<dbReference type="CDD" id="cd17416">
    <property type="entry name" value="MFS_NPF1_2"/>
    <property type="match status" value="1"/>
</dbReference>
<dbReference type="Gene3D" id="1.20.1250.20">
    <property type="entry name" value="MFS general substrate transporter like domains"/>
    <property type="match status" value="1"/>
</dbReference>
<dbReference type="InterPro" id="IPR036259">
    <property type="entry name" value="MFS_trans_sf"/>
</dbReference>
<dbReference type="InterPro" id="IPR000109">
    <property type="entry name" value="POT_fam"/>
</dbReference>
<dbReference type="PANTHER" id="PTHR11654">
    <property type="entry name" value="OLIGOPEPTIDE TRANSPORTER-RELATED"/>
    <property type="match status" value="1"/>
</dbReference>
<dbReference type="Pfam" id="PF00854">
    <property type="entry name" value="PTR2"/>
    <property type="match status" value="1"/>
</dbReference>
<dbReference type="SUPFAM" id="SSF103473">
    <property type="entry name" value="MFS general substrate transporter"/>
    <property type="match status" value="1"/>
</dbReference>
<organism>
    <name type="scientific">Arabidopsis thaliana</name>
    <name type="common">Mouse-ear cress</name>
    <dbReference type="NCBI Taxonomy" id="3702"/>
    <lineage>
        <taxon>Eukaryota</taxon>
        <taxon>Viridiplantae</taxon>
        <taxon>Streptophyta</taxon>
        <taxon>Embryophyta</taxon>
        <taxon>Tracheophyta</taxon>
        <taxon>Spermatophyta</taxon>
        <taxon>Magnoliopsida</taxon>
        <taxon>eudicotyledons</taxon>
        <taxon>Gunneridae</taxon>
        <taxon>Pentapetalae</taxon>
        <taxon>rosids</taxon>
        <taxon>malvids</taxon>
        <taxon>Brassicales</taxon>
        <taxon>Brassicaceae</taxon>
        <taxon>Camelineae</taxon>
        <taxon>Arabidopsis</taxon>
    </lineage>
</organism>
<sequence length="620" mass="68417">MVLEDRKDGSSLPGRSGSFSKSSPSELDVVDPYKRISSPGSILDAEKVEKKPGGWRAVSFILGNETLERLGSIGLLANFMVYLTKVFHLEQVDAANVINIWSGFTNLTPLVGAYISDTYVGRFKTIAFASFATLLGLITITLTASFPQLHPASCNSQDPLSCGGPNKLQIGVLLLGLCFLSVGSGGIRPCSIPFGVDQFDQRTEEGVKGVASFFNWYYMTFTVVLIITQTVVVYIQDQVSWIIGFSIPTGLMALAVVMFFAGMKRYVYVKPEGSIFSGIAQVIVAARKKRKLKLPAEDDGTVTYYDPAIKSSVLSKLHRSNQFRCLDKAAVVIEGDLTPEGPPADKWRLCSVQEVEEVKCLIRIVPIWSAGIISLAAMTTQGTFTVSQALKMDRNLGPKFEIPAGSLSVISLLTIGIFLPFYDRVFVPFMRRITGHKSGITLLQRIGTGIVFAIFSMIVAGIVERMRRIRSINAGDPTGMTPMSVFWLSPQLILMGLCEAFNIIGQIEFFNSQFPEHMRSIANSLFSLSFAGSSYLSSFLVTVVHKFSGGHDRPDWLNKNLNAGKLDYFYYLIAVLGVVNLVYFWYCARGYRYKVGLPIEDFEEDKSSDDVEMTSKKSMK</sequence>
<name>PTR21_ARATH</name>
<feature type="chain" id="PRO_0000399955" description="Protein NRT1/ PTR FAMILY 2.13">
    <location>
        <begin position="1"/>
        <end position="620"/>
    </location>
</feature>
<feature type="transmembrane region" description="Helical" evidence="1">
    <location>
        <begin position="70"/>
        <end position="90"/>
    </location>
</feature>
<feature type="transmembrane region" description="Helical" evidence="1">
    <location>
        <begin position="95"/>
        <end position="115"/>
    </location>
</feature>
<feature type="transmembrane region" description="Helical" evidence="1">
    <location>
        <begin position="126"/>
        <end position="146"/>
    </location>
</feature>
<feature type="transmembrane region" description="Helical" evidence="1">
    <location>
        <begin position="167"/>
        <end position="187"/>
    </location>
</feature>
<feature type="transmembrane region" description="Helical" evidence="1">
    <location>
        <begin position="213"/>
        <end position="233"/>
    </location>
</feature>
<feature type="transmembrane region" description="Helical" evidence="1">
    <location>
        <begin position="241"/>
        <end position="261"/>
    </location>
</feature>
<feature type="transmembrane region" description="Helical" evidence="1">
    <location>
        <begin position="364"/>
        <end position="384"/>
    </location>
</feature>
<feature type="transmembrane region" description="Helical" evidence="1">
    <location>
        <begin position="402"/>
        <end position="422"/>
    </location>
</feature>
<feature type="transmembrane region" description="Helical" evidence="1">
    <location>
        <begin position="443"/>
        <end position="463"/>
    </location>
</feature>
<feature type="transmembrane region" description="Helical" evidence="1">
    <location>
        <begin position="485"/>
        <end position="505"/>
    </location>
</feature>
<feature type="transmembrane region" description="Helical" evidence="1">
    <location>
        <begin position="524"/>
        <end position="544"/>
    </location>
</feature>
<feature type="transmembrane region" description="Helical" evidence="1">
    <location>
        <begin position="568"/>
        <end position="588"/>
    </location>
</feature>
<feature type="region of interest" description="Disordered" evidence="2">
    <location>
        <begin position="1"/>
        <end position="32"/>
    </location>
</feature>
<feature type="compositionally biased region" description="Low complexity" evidence="2">
    <location>
        <begin position="10"/>
        <end position="25"/>
    </location>
</feature>
<reference key="1">
    <citation type="journal article" date="2000" name="Nature">
        <title>Sequence and analysis of chromosome 1 of the plant Arabidopsis thaliana.</title>
        <authorList>
            <person name="Theologis A."/>
            <person name="Ecker J.R."/>
            <person name="Palm C.J."/>
            <person name="Federspiel N.A."/>
            <person name="Kaul S."/>
            <person name="White O."/>
            <person name="Alonso J."/>
            <person name="Altafi H."/>
            <person name="Araujo R."/>
            <person name="Bowman C.L."/>
            <person name="Brooks S.Y."/>
            <person name="Buehler E."/>
            <person name="Chan A."/>
            <person name="Chao Q."/>
            <person name="Chen H."/>
            <person name="Cheuk R.F."/>
            <person name="Chin C.W."/>
            <person name="Chung M.K."/>
            <person name="Conn L."/>
            <person name="Conway A.B."/>
            <person name="Conway A.R."/>
            <person name="Creasy T.H."/>
            <person name="Dewar K."/>
            <person name="Dunn P."/>
            <person name="Etgu P."/>
            <person name="Feldblyum T.V."/>
            <person name="Feng J.-D."/>
            <person name="Fong B."/>
            <person name="Fujii C.Y."/>
            <person name="Gill J.E."/>
            <person name="Goldsmith A.D."/>
            <person name="Haas B."/>
            <person name="Hansen N.F."/>
            <person name="Hughes B."/>
            <person name="Huizar L."/>
            <person name="Hunter J.L."/>
            <person name="Jenkins J."/>
            <person name="Johnson-Hopson C."/>
            <person name="Khan S."/>
            <person name="Khaykin E."/>
            <person name="Kim C.J."/>
            <person name="Koo H.L."/>
            <person name="Kremenetskaia I."/>
            <person name="Kurtz D.B."/>
            <person name="Kwan A."/>
            <person name="Lam B."/>
            <person name="Langin-Hooper S."/>
            <person name="Lee A."/>
            <person name="Lee J.M."/>
            <person name="Lenz C.A."/>
            <person name="Li J.H."/>
            <person name="Li Y.-P."/>
            <person name="Lin X."/>
            <person name="Liu S.X."/>
            <person name="Liu Z.A."/>
            <person name="Luros J.S."/>
            <person name="Maiti R."/>
            <person name="Marziali A."/>
            <person name="Militscher J."/>
            <person name="Miranda M."/>
            <person name="Nguyen M."/>
            <person name="Nierman W.C."/>
            <person name="Osborne B.I."/>
            <person name="Pai G."/>
            <person name="Peterson J."/>
            <person name="Pham P.K."/>
            <person name="Rizzo M."/>
            <person name="Rooney T."/>
            <person name="Rowley D."/>
            <person name="Sakano H."/>
            <person name="Salzberg S.L."/>
            <person name="Schwartz J.R."/>
            <person name="Shinn P."/>
            <person name="Southwick A.M."/>
            <person name="Sun H."/>
            <person name="Tallon L.J."/>
            <person name="Tambunga G."/>
            <person name="Toriumi M.J."/>
            <person name="Town C.D."/>
            <person name="Utterback T."/>
            <person name="Van Aken S."/>
            <person name="Vaysberg M."/>
            <person name="Vysotskaia V.S."/>
            <person name="Walker M."/>
            <person name="Wu D."/>
            <person name="Yu G."/>
            <person name="Fraser C.M."/>
            <person name="Venter J.C."/>
            <person name="Davis R.W."/>
        </authorList>
    </citation>
    <scope>NUCLEOTIDE SEQUENCE [LARGE SCALE GENOMIC DNA]</scope>
    <source>
        <strain>cv. Columbia</strain>
    </source>
</reference>
<reference key="2">
    <citation type="journal article" date="2017" name="Plant J.">
        <title>Araport11: a complete reannotation of the Arabidopsis thaliana reference genome.</title>
        <authorList>
            <person name="Cheng C.Y."/>
            <person name="Krishnakumar V."/>
            <person name="Chan A.P."/>
            <person name="Thibaud-Nissen F."/>
            <person name="Schobel S."/>
            <person name="Town C.D."/>
        </authorList>
    </citation>
    <scope>GENOME REANNOTATION</scope>
    <source>
        <strain>cv. Columbia</strain>
    </source>
</reference>
<reference key="3">
    <citation type="journal article" date="2003" name="Science">
        <title>Empirical analysis of transcriptional activity in the Arabidopsis genome.</title>
        <authorList>
            <person name="Yamada K."/>
            <person name="Lim J."/>
            <person name="Dale J.M."/>
            <person name="Chen H."/>
            <person name="Shinn P."/>
            <person name="Palm C.J."/>
            <person name="Southwick A.M."/>
            <person name="Wu H.C."/>
            <person name="Kim C.J."/>
            <person name="Nguyen M."/>
            <person name="Pham P.K."/>
            <person name="Cheuk R.F."/>
            <person name="Karlin-Newmann G."/>
            <person name="Liu S.X."/>
            <person name="Lam B."/>
            <person name="Sakano H."/>
            <person name="Wu T."/>
            <person name="Yu G."/>
            <person name="Miranda M."/>
            <person name="Quach H.L."/>
            <person name="Tripp M."/>
            <person name="Chang C.H."/>
            <person name="Lee J.M."/>
            <person name="Toriumi M.J."/>
            <person name="Chan M.M."/>
            <person name="Tang C.C."/>
            <person name="Onodera C.S."/>
            <person name="Deng J.M."/>
            <person name="Akiyama K."/>
            <person name="Ansari Y."/>
            <person name="Arakawa T."/>
            <person name="Banh J."/>
            <person name="Banno F."/>
            <person name="Bowser L."/>
            <person name="Brooks S.Y."/>
            <person name="Carninci P."/>
            <person name="Chao Q."/>
            <person name="Choy N."/>
            <person name="Enju A."/>
            <person name="Goldsmith A.D."/>
            <person name="Gurjal M."/>
            <person name="Hansen N.F."/>
            <person name="Hayashizaki Y."/>
            <person name="Johnson-Hopson C."/>
            <person name="Hsuan V.W."/>
            <person name="Iida K."/>
            <person name="Karnes M."/>
            <person name="Khan S."/>
            <person name="Koesema E."/>
            <person name="Ishida J."/>
            <person name="Jiang P.X."/>
            <person name="Jones T."/>
            <person name="Kawai J."/>
            <person name="Kamiya A."/>
            <person name="Meyers C."/>
            <person name="Nakajima M."/>
            <person name="Narusaka M."/>
            <person name="Seki M."/>
            <person name="Sakurai T."/>
            <person name="Satou M."/>
            <person name="Tamse R."/>
            <person name="Vaysberg M."/>
            <person name="Wallender E.K."/>
            <person name="Wong C."/>
            <person name="Yamamura Y."/>
            <person name="Yuan S."/>
            <person name="Shinozaki K."/>
            <person name="Davis R.W."/>
            <person name="Theologis A."/>
            <person name="Ecker J.R."/>
        </authorList>
    </citation>
    <scope>NUCLEOTIDE SEQUENCE [LARGE SCALE MRNA]</scope>
    <source>
        <strain>cv. Columbia</strain>
    </source>
</reference>
<reference key="4">
    <citation type="journal article" date="2004" name="Plant Cell">
        <title>Phosphoproteomics of the Arabidopsis plasma membrane and a new phosphorylation site database.</title>
        <authorList>
            <person name="Nuehse T.S."/>
            <person name="Stensballe A."/>
            <person name="Jensen O.N."/>
            <person name="Peck S.C."/>
        </authorList>
    </citation>
    <scope>IDENTIFICATION BY MASS SPECTROMETRY [LARGE SCALE ANALYSIS]</scope>
</reference>
<reference key="5">
    <citation type="journal article" date="2007" name="FEBS Lett.">
        <title>Nitrate transporters and peptide transporters.</title>
        <authorList>
            <person name="Tsay Y.F."/>
            <person name="Chiu C.C."/>
            <person name="Tsai C.B."/>
            <person name="Ho C.H."/>
            <person name="Hsu P.K."/>
        </authorList>
    </citation>
    <scope>TISSUE SPECIFICITY</scope>
    <scope>GENE FAMILY</scope>
</reference>
<reference key="6">
    <citation type="journal article" date="2009" name="Plant Cell">
        <title>The Arabidopsis nitrate transporter NRT1.7, expressed in phloem, is responsible for source-to-sink remobilization of nitrate.</title>
        <authorList>
            <person name="Fan S.C."/>
            <person name="Lin C.S."/>
            <person name="Hsu P.K."/>
            <person name="Lin S.H."/>
            <person name="Tsay Y.F."/>
        </authorList>
    </citation>
    <scope>FUNCTION</scope>
    <scope>BIOPHYSICOCHEMICAL PROPERTIES</scope>
    <scope>TISSUE SPECIFICITY</scope>
    <scope>SUBCELLULAR LOCATION</scope>
    <scope>INDUCTION</scope>
    <scope>DISRUPTION PHENOTYPE</scope>
</reference>
<reference key="7">
    <citation type="journal article" date="2009" name="Plant Physiol.">
        <title>Large-scale Arabidopsis phosphoproteome profiling reveals novel chloroplast kinase substrates and phosphorylation networks.</title>
        <authorList>
            <person name="Reiland S."/>
            <person name="Messerli G."/>
            <person name="Baerenfaller K."/>
            <person name="Gerrits B."/>
            <person name="Endler A."/>
            <person name="Grossmann J."/>
            <person name="Gruissem W."/>
            <person name="Baginsky S."/>
        </authorList>
    </citation>
    <scope>IDENTIFICATION BY MASS SPECTROMETRY [LARGE SCALE ANALYSIS]</scope>
</reference>
<reference key="8">
    <citation type="journal article" date="2010" name="Plant Cell">
        <title>The Arabidopsis nitrate transporter NRT1.8 functions in nitrate removal from the xylem sap and mediates cadmium tolerance.</title>
        <authorList>
            <person name="Li J.Y."/>
            <person name="Fu Y.L."/>
            <person name="Pike S.M."/>
            <person name="Bao J."/>
            <person name="Tian W."/>
            <person name="Zhang Y."/>
            <person name="Chen C.Z."/>
            <person name="Zhang Y."/>
            <person name="Li H.M."/>
            <person name="Huang J."/>
            <person name="Li L.G."/>
            <person name="Schroeder J.I."/>
            <person name="Gassmann W."/>
            <person name="Gong J.M."/>
        </authorList>
    </citation>
    <scope>GENE FAMILY</scope>
</reference>
<reference key="9">
    <citation type="journal article" date="2012" name="Nature">
        <title>NRT/PTR transporters are essential for translocation of glucosinolate defence compounds to seeds.</title>
        <authorList>
            <person name="Nour-Eldin H.H."/>
            <person name="Andersen T.G."/>
            <person name="Burow M."/>
            <person name="Madsen S.R."/>
            <person name="Jorgensen M.E."/>
            <person name="Olsen C.E."/>
            <person name="Dreyer I."/>
            <person name="Hedrich R."/>
            <person name="Geiger D."/>
            <person name="Halkier B.A."/>
        </authorList>
    </citation>
    <scope>FUNCTION</scope>
</reference>
<reference key="10">
    <citation type="journal article" date="2014" name="Trends Plant Sci.">
        <title>A unified nomenclature of NITRATE TRANSPORTER 1/PEPTIDE TRANSPORTER family members in plants.</title>
        <authorList>
            <person name="Leran S."/>
            <person name="Varala K."/>
            <person name="Boyer J.C."/>
            <person name="Chiurazzi M."/>
            <person name="Crawford N."/>
            <person name="Daniel-Vedele F."/>
            <person name="David L."/>
            <person name="Dickstein R."/>
            <person name="Fernandez E."/>
            <person name="Forde B."/>
            <person name="Gassmann W."/>
            <person name="Geiger D."/>
            <person name="Gojon A."/>
            <person name="Gong J.M."/>
            <person name="Halkier B.A."/>
            <person name="Harris J.M."/>
            <person name="Hedrich R."/>
            <person name="Limami A.M."/>
            <person name="Rentsch D."/>
            <person name="Seo M."/>
            <person name="Tsay Y.F."/>
            <person name="Zhang M."/>
            <person name="Coruzzi G."/>
            <person name="Lacombe B."/>
        </authorList>
    </citation>
    <scope>GENE FAMILY</scope>
    <scope>NOMENCLATURE</scope>
</reference>
<reference key="11">
    <citation type="journal article" date="2017" name="New Phytol.">
        <title>Nitrogen Limitation Adaptation (NLA) is involved in source-to-sink remobilization of nitrate by mediating the degradation of NRT1.7 in Arabidopsis.</title>
        <authorList>
            <person name="Liu W."/>
            <person name="Sun Q."/>
            <person name="Wang K."/>
            <person name="Du Q."/>
            <person name="Li W.X."/>
        </authorList>
    </citation>
    <scope>INTERACTION WITH NLA</scope>
    <scope>SUBCELLULAR LOCATION</scope>
    <scope>UBIQUITINATION BY NLA</scope>
</reference>
<protein>
    <recommendedName>
        <fullName>Protein NRT1/ PTR FAMILY 2.13</fullName>
        <shortName>AtNPF2.13</shortName>
    </recommendedName>
    <alternativeName>
        <fullName>Nitrate transporter 1.7</fullName>
    </alternativeName>
</protein>
<gene>
    <name type="primary">NPF2.13</name>
    <name type="synonym">NRT1.7</name>
    <name type="ordered locus">At1g69870</name>
    <name type="ORF">T17F3.10</name>
</gene>
<comment type="function">
    <text evidence="4 5">Low-affinity proton-dependent nitrate transporter. Not involved in dipeptides transport, but has a weak glucosinolate transport activity. Involved in phloem loading and nitrate remobilization from the older leaves to other tissues.</text>
</comment>
<comment type="biophysicochemical properties">
    <kinetics>
        <KM evidence="4">2.8 mM for nitrate at -60 mV</KM>
    </kinetics>
</comment>
<comment type="subunit">
    <text evidence="6">Interacts with NLA.</text>
</comment>
<comment type="subcellular location">
    <subcellularLocation>
        <location evidence="4 6">Cell membrane</location>
        <topology evidence="1">Multi-pass membrane protein</topology>
    </subcellularLocation>
    <text evidence="6">Localizes at the plasma membrane, where it interacts with NLA.</text>
</comment>
<comment type="tissue specificity">
    <text evidence="3 4">Expressed in leaves and flowers. Detected in stems and siliques. Highest expression in the distal lamina of older leaves. Restricted to the sieve element and companion cell complex of the minor vein.</text>
</comment>
<comment type="induction">
    <text evidence="4">Circadian-regulation. Expression increase during the light phase and decrease during the dark phase.</text>
</comment>
<comment type="PTM">
    <text evidence="6">Ubiquitinated by NLA. Ubiquitination of NPF2.13 leads to its degradation by the proteasome.</text>
</comment>
<comment type="disruption phenotype">
    <text evidence="4">No visible phenotype when grown under normal conditions. Growth retardation when starved of nitrogen.</text>
</comment>
<comment type="similarity">
    <text evidence="7">Belongs to the major facilitator superfamily. Proton-dependent oligopeptide transporter (POT/PTR) (TC 2.A.17) family.</text>
</comment>
<comment type="sequence caution" evidence="7">
    <conflict type="erroneous gene model prediction">
        <sequence resource="EMBL-CDS" id="AAG52567"/>
    </conflict>
</comment>